<name>AH2_PRUSE</name>
<feature type="chain" id="PRO_0000064499" description="Amygdalin beta-glucosidase I'">
    <location>
        <begin position="1"/>
        <end position="15" status="greater than"/>
    </location>
</feature>
<feature type="non-terminal residue">
    <location>
        <position position="15"/>
    </location>
</feature>
<protein>
    <recommendedName>
        <fullName>Amygdalin beta-glucosidase I'</fullName>
        <ecNumber>3.2.1.117</ecNumber>
    </recommendedName>
    <alternativeName>
        <fullName>Amygdalin hydrolase isozyme I'</fullName>
        <shortName>AH I'</shortName>
    </alternativeName>
</protein>
<sequence>AKTDPPIHFASLXRS</sequence>
<accession>P29260</accession>
<organism>
    <name type="scientific">Prunus serotina</name>
    <name type="common">Black cherry</name>
    <dbReference type="NCBI Taxonomy" id="23207"/>
    <lineage>
        <taxon>Eukaryota</taxon>
        <taxon>Viridiplantae</taxon>
        <taxon>Streptophyta</taxon>
        <taxon>Embryophyta</taxon>
        <taxon>Tracheophyta</taxon>
        <taxon>Spermatophyta</taxon>
        <taxon>Magnoliopsida</taxon>
        <taxon>eudicotyledons</taxon>
        <taxon>Gunneridae</taxon>
        <taxon>Pentapetalae</taxon>
        <taxon>rosids</taxon>
        <taxon>fabids</taxon>
        <taxon>Rosales</taxon>
        <taxon>Rosaceae</taxon>
        <taxon>Amygdaloideae</taxon>
        <taxon>Amygdaleae</taxon>
        <taxon>Prunus</taxon>
    </lineage>
</organism>
<reference key="1">
    <citation type="journal article" date="1992" name="Plant Physiol.">
        <title>Prunus serotina amygdalin hydrolase and prunasin hydrolase: purification, N-terminal sequencing, and antibody production.</title>
        <authorList>
            <person name="Li C.P."/>
            <person name="Swain E."/>
            <person name="Poulton J.E."/>
        </authorList>
    </citation>
    <scope>PROTEIN SEQUENCE</scope>
    <source>
        <tissue>Seed</tissue>
    </source>
</reference>
<dbReference type="EC" id="3.2.1.117"/>
<dbReference type="CAZy" id="GH1">
    <property type="family name" value="Glycoside Hydrolase Family 1"/>
</dbReference>
<dbReference type="GO" id="GO:0047668">
    <property type="term" value="F:amygdalin beta-glucosidase activity"/>
    <property type="evidence" value="ECO:0007669"/>
    <property type="project" value="UniProtKB-EC"/>
</dbReference>
<comment type="catalytic activity">
    <reaction>
        <text>(R)-amygdalin + H2O = (R)-prunasin + D-glucose</text>
        <dbReference type="Rhea" id="RHEA:14177"/>
        <dbReference type="ChEBI" id="CHEBI:4167"/>
        <dbReference type="ChEBI" id="CHEBI:15377"/>
        <dbReference type="ChEBI" id="CHEBI:17019"/>
        <dbReference type="ChEBI" id="CHEBI:17396"/>
        <dbReference type="EC" id="3.2.1.117"/>
    </reaction>
</comment>
<comment type="subunit">
    <text>Monomer.</text>
</comment>
<comment type="developmental stage">
    <text>Absent from maturing black cherry fruits until 6 weeks after flowering. Then, concomitant with cotyledon development, the level of enzyme increases with specificity for embryonal tissues.</text>
</comment>
<comment type="PTM">
    <text>Glycosylated.</text>
</comment>
<proteinExistence type="evidence at protein level"/>
<keyword id="KW-0903">Direct protein sequencing</keyword>
<keyword id="KW-0325">Glycoprotein</keyword>
<keyword id="KW-0326">Glycosidase</keyword>
<keyword id="KW-0378">Hydrolase</keyword>